<evidence type="ECO:0000250" key="1"/>
<evidence type="ECO:0000256" key="2">
    <source>
        <dbReference type="SAM" id="MobiDB-lite"/>
    </source>
</evidence>
<evidence type="ECO:0000305" key="3"/>
<comment type="catalytic activity">
    <reaction>
        <text>L-lysine + H(+) = cadaverine + CO2</text>
        <dbReference type="Rhea" id="RHEA:22352"/>
        <dbReference type="ChEBI" id="CHEBI:15378"/>
        <dbReference type="ChEBI" id="CHEBI:16526"/>
        <dbReference type="ChEBI" id="CHEBI:32551"/>
        <dbReference type="ChEBI" id="CHEBI:58384"/>
        <dbReference type="EC" id="4.1.1.18"/>
    </reaction>
</comment>
<comment type="cofactor">
    <cofactor>
        <name>pyridoxal 5'-phosphate</name>
        <dbReference type="ChEBI" id="CHEBI:597326"/>
    </cofactor>
</comment>
<comment type="subcellular location">
    <subcellularLocation>
        <location evidence="3">Cytoplasm</location>
    </subcellularLocation>
</comment>
<comment type="similarity">
    <text evidence="3">Belongs to the Orn/Lys/Arg decarboxylase class-I family.</text>
</comment>
<name>DCLY_HAFAL</name>
<accession>P05033</accession>
<organism>
    <name type="scientific">Hafnia alvei</name>
    <dbReference type="NCBI Taxonomy" id="569"/>
    <lineage>
        <taxon>Bacteria</taxon>
        <taxon>Pseudomonadati</taxon>
        <taxon>Pseudomonadota</taxon>
        <taxon>Gammaproteobacteria</taxon>
        <taxon>Enterobacterales</taxon>
        <taxon>Hafniaceae</taxon>
        <taxon>Hafnia</taxon>
    </lineage>
</organism>
<reference key="1">
    <citation type="journal article" date="1986" name="Mol. Gen. Genet.">
        <title>Cloning and characterization of a lysine decarboxylase gene from Hafnia alvei.</title>
        <authorList>
            <person name="Fecker L.F."/>
            <person name="Beier H."/>
            <person name="Berlin J."/>
        </authorList>
    </citation>
    <scope>NUCLEOTIDE SEQUENCE [GENOMIC DNA]</scope>
</reference>
<proteinExistence type="inferred from homology"/>
<keyword id="KW-0963">Cytoplasm</keyword>
<keyword id="KW-0210">Decarboxylase</keyword>
<keyword id="KW-0456">Lyase</keyword>
<keyword id="KW-0663">Pyridoxal phosphate</keyword>
<protein>
    <recommendedName>
        <fullName>Lysine decarboxylase</fullName>
        <shortName>LDC</shortName>
        <ecNumber>4.1.1.18</ecNumber>
    </recommendedName>
</protein>
<feature type="chain" id="PRO_0000201143" description="Lysine decarboxylase">
    <location>
        <begin position="1"/>
        <end position="739"/>
    </location>
</feature>
<feature type="region of interest" description="Disordered" evidence="2">
    <location>
        <begin position="714"/>
        <end position="739"/>
    </location>
</feature>
<feature type="compositionally biased region" description="Basic and acidic residues" evidence="2">
    <location>
        <begin position="714"/>
        <end position="726"/>
    </location>
</feature>
<feature type="compositionally biased region" description="Basic residues" evidence="2">
    <location>
        <begin position="728"/>
        <end position="739"/>
    </location>
</feature>
<feature type="modified residue" description="N6-(pyridoxal phosphate)lysine" evidence="1">
    <location>
        <position position="367"/>
    </location>
</feature>
<sequence length="739" mass="83127">MNIIAIMNDLSAYFKEEPLRELHQELEKEGFRIAYPKDRNDLLKLIENNSRLCGVIFDWDKYNLELSAEISELNKLLPIYAFANTYSTLDVNMSDLRLNVRFFEYALGSAQDIATKIRQSTDQYIDTILPPLTKALFKYVKEEKYTVCTPGHMGGTAFDKSPVGSLFYDFFGENTMRSDISISVSELGSLLDHSGPHRDAEEYIARTFNADRSYIVTNGTSTANKIVGMYSSPAGATILIDRNCHKSLTHLMMMSNVVPVYLRPTRNAYGILGGIPQSEFTRASIEEKVKNTPNATWPVHAVVTNSTYDGLFYNTEYIKNTLDVKSIHFDSAWVPYTNFHPIYQGKAGMSGERVPGKIIYETQSTHKLLAAFSQASMIHVKGEINEETFNEAYMMHTSTSPHYGIVASTETAAAMMKGNAGKRLINGSIERAIRFRKEIRRLRTESDGWFFDVWQPDNIDEVACWPLNPRNEWHGFPNIDNDHMYLDPIKVTLLTPGLSPNGTLEEEGIPASIVSKYLDEHGIIVEKTGPYNLLFLFSIGIDKTKALSLLRALTDFKRVYDLNLRVKNVLPSLYNEAPDFYKEMRIQELAQGIHALVKHHNLPDLMYRAFEVLPKLVMTPHDAFQEEVRGNIEPCALDDMLGKVSANMILPYPPGVPVVMPGEMLTKESRPVLSFLQMLCEIGAHYPGFETDIHGVHRDGATGKYMVVVLKQGADEPGDKPSDTVKKAPGKKPSAAKKS</sequence>
<dbReference type="EC" id="4.1.1.18"/>
<dbReference type="EMBL" id="X03774">
    <property type="protein sequence ID" value="CAA27400.1"/>
    <property type="molecule type" value="Genomic_DNA"/>
</dbReference>
<dbReference type="PIR" id="A26016">
    <property type="entry name" value="A26016"/>
</dbReference>
<dbReference type="SMR" id="P05033"/>
<dbReference type="STRING" id="569.A6V27_04775"/>
<dbReference type="BindingDB" id="P05033"/>
<dbReference type="ChEMBL" id="CHEMBL4630867"/>
<dbReference type="GO" id="GO:0005829">
    <property type="term" value="C:cytosol"/>
    <property type="evidence" value="ECO:0007669"/>
    <property type="project" value="TreeGrafter"/>
</dbReference>
<dbReference type="GO" id="GO:0008792">
    <property type="term" value="F:arginine decarboxylase activity"/>
    <property type="evidence" value="ECO:0007669"/>
    <property type="project" value="TreeGrafter"/>
</dbReference>
<dbReference type="GO" id="GO:0008923">
    <property type="term" value="F:lysine decarboxylase activity"/>
    <property type="evidence" value="ECO:0007669"/>
    <property type="project" value="UniProtKB-EC"/>
</dbReference>
<dbReference type="GO" id="GO:0030170">
    <property type="term" value="F:pyridoxal phosphate binding"/>
    <property type="evidence" value="ECO:0007669"/>
    <property type="project" value="TreeGrafter"/>
</dbReference>
<dbReference type="GO" id="GO:0006527">
    <property type="term" value="P:arginine catabolic process"/>
    <property type="evidence" value="ECO:0007669"/>
    <property type="project" value="TreeGrafter"/>
</dbReference>
<dbReference type="CDD" id="cd00615">
    <property type="entry name" value="Orn_deC_like"/>
    <property type="match status" value="1"/>
</dbReference>
<dbReference type="FunFam" id="3.40.640.10:FF:000008">
    <property type="entry name" value="Lysine decarboxylase, inducible"/>
    <property type="match status" value="1"/>
</dbReference>
<dbReference type="FunFam" id="3.90.100.10:FF:000001">
    <property type="entry name" value="Lysine decarboxylase, inducible"/>
    <property type="match status" value="1"/>
</dbReference>
<dbReference type="FunFam" id="3.90.1150.10:FF:000016">
    <property type="entry name" value="Lysine decarboxylase, inducible"/>
    <property type="match status" value="1"/>
</dbReference>
<dbReference type="Gene3D" id="3.40.50.2300">
    <property type="match status" value="1"/>
</dbReference>
<dbReference type="Gene3D" id="3.90.1150.10">
    <property type="entry name" value="Aspartate Aminotransferase, domain 1"/>
    <property type="match status" value="1"/>
</dbReference>
<dbReference type="Gene3D" id="3.90.100.10">
    <property type="entry name" value="Orn/Lys/Arg decarboxylase, C-terminal domain"/>
    <property type="match status" value="1"/>
</dbReference>
<dbReference type="Gene3D" id="3.40.640.10">
    <property type="entry name" value="Type I PLP-dependent aspartate aminotransferase-like (Major domain)"/>
    <property type="match status" value="1"/>
</dbReference>
<dbReference type="InterPro" id="IPR005308">
    <property type="entry name" value="OKR_de-COase_N"/>
</dbReference>
<dbReference type="InterPro" id="IPR011193">
    <property type="entry name" value="Orn/lys/arg_de-COase"/>
</dbReference>
<dbReference type="InterPro" id="IPR000310">
    <property type="entry name" value="Orn/Lys/Arg_deCO2ase_major_dom"/>
</dbReference>
<dbReference type="InterPro" id="IPR008286">
    <property type="entry name" value="Prn/Lys/Arg_de-COase_C"/>
</dbReference>
<dbReference type="InterPro" id="IPR036633">
    <property type="entry name" value="Prn/Lys/Arg_de-COase_C_sf"/>
</dbReference>
<dbReference type="InterPro" id="IPR015424">
    <property type="entry name" value="PyrdxlP-dep_Trfase"/>
</dbReference>
<dbReference type="InterPro" id="IPR015421">
    <property type="entry name" value="PyrdxlP-dep_Trfase_major"/>
</dbReference>
<dbReference type="InterPro" id="IPR015422">
    <property type="entry name" value="PyrdxlP-dep_Trfase_small"/>
</dbReference>
<dbReference type="NCBIfam" id="NF011928">
    <property type="entry name" value="PRK15399.1"/>
    <property type="match status" value="1"/>
</dbReference>
<dbReference type="NCBIfam" id="NF011929">
    <property type="entry name" value="PRK15400.1"/>
    <property type="match status" value="1"/>
</dbReference>
<dbReference type="PANTHER" id="PTHR45229:SF3">
    <property type="entry name" value="BIODEGRADATIVE ARGININE DECARBOXYLASE"/>
    <property type="match status" value="1"/>
</dbReference>
<dbReference type="PANTHER" id="PTHR45229">
    <property type="entry name" value="CONSTITUTIVE ORNITHINE DECARBOXYLASE"/>
    <property type="match status" value="1"/>
</dbReference>
<dbReference type="Pfam" id="PF01276">
    <property type="entry name" value="OKR_DC_1"/>
    <property type="match status" value="1"/>
</dbReference>
<dbReference type="Pfam" id="PF03711">
    <property type="entry name" value="OKR_DC_1_C"/>
    <property type="match status" value="1"/>
</dbReference>
<dbReference type="Pfam" id="PF03709">
    <property type="entry name" value="OKR_DC_1_N"/>
    <property type="match status" value="1"/>
</dbReference>
<dbReference type="PIRSF" id="PIRSF009393">
    <property type="entry name" value="Orn_decarb"/>
    <property type="match status" value="1"/>
</dbReference>
<dbReference type="SUPFAM" id="SSF55904">
    <property type="entry name" value="Ornithine decarboxylase C-terminal domain"/>
    <property type="match status" value="1"/>
</dbReference>
<dbReference type="SUPFAM" id="SSF53383">
    <property type="entry name" value="PLP-dependent transferases"/>
    <property type="match status" value="1"/>
</dbReference>
<dbReference type="PROSITE" id="PS00703">
    <property type="entry name" value="OKR_DC_1"/>
    <property type="match status" value="1"/>
</dbReference>